<sequence length="400" mass="43133">MTEFIPAGTLYHALPSPFPMKRGGVLHQARVAYETWGTLAADRSNAILIVTGLSPNAHAAANQANPEPGWWEAMLGPGKPIDTARWFVVCVNSLGSCKGSTGPASVNPDTGAPYRLSFPDLSIEDVADAAADVVHALGIAQLACLIGNSMGGMTALALLLRHPGIARSHINISGSAQALPFSIAIRSLQREAIRLDPHWNGGHYDDVRYPESGMRMARKLGVITYRSALEWDGRFGRVRLDSEQAADDPFGLEFQVESYLEGHARRFVRFFDPNCYLYLSRSMDWFDLAEYVEERPVAGSAIDNARADARPASAKPQTGVSTADTVLAGLARIRIARALAIGANTDILFPVQQQEQIADGLRAGGADAQFIGLDSPQGHDAFLVDFARFGPAVSDFLQDC</sequence>
<evidence type="ECO:0000255" key="1">
    <source>
        <dbReference type="HAMAP-Rule" id="MF_00296"/>
    </source>
</evidence>
<accession>Q8PK44</accession>
<comment type="function">
    <text evidence="1">Transfers a succinyl group from succinyl-CoA to L-serine, forming succinyl-L-serine.</text>
</comment>
<comment type="catalytic activity">
    <reaction evidence="1">
        <text>succinyl-CoA + L-serine = O-succinyl-L-serine + CoA</text>
        <dbReference type="Rhea" id="RHEA:52820"/>
        <dbReference type="ChEBI" id="CHEBI:33384"/>
        <dbReference type="ChEBI" id="CHEBI:57287"/>
        <dbReference type="ChEBI" id="CHEBI:57292"/>
        <dbReference type="ChEBI" id="CHEBI:136856"/>
    </reaction>
</comment>
<comment type="pathway">
    <text evidence="1">Amino-acid biosynthesis; L-cysteine biosynthesis; L-cysteine from L-serine: step 1/2.</text>
</comment>
<comment type="subunit">
    <text evidence="1">Homodimer.</text>
</comment>
<comment type="subcellular location">
    <subcellularLocation>
        <location evidence="1">Cytoplasm</location>
    </subcellularLocation>
</comment>
<comment type="similarity">
    <text evidence="1">Belongs to the AB hydrolase superfamily. MetX family.</text>
</comment>
<feature type="chain" id="PRO_0000155746" description="Serine O-succinyltransferase">
    <location>
        <begin position="1"/>
        <end position="400"/>
    </location>
</feature>
<feature type="domain" description="AB hydrolase-1" evidence="1">
    <location>
        <begin position="45"/>
        <end position="385"/>
    </location>
</feature>
<feature type="region of interest" description="Important for substrate specificity" evidence="1">
    <location>
        <begin position="52"/>
        <end position="55"/>
    </location>
</feature>
<feature type="active site" description="Nucleophile" evidence="1">
    <location>
        <position position="149"/>
    </location>
</feature>
<feature type="active site" evidence="1">
    <location>
        <position position="346"/>
    </location>
</feature>
<feature type="active site" evidence="1">
    <location>
        <position position="379"/>
    </location>
</feature>
<feature type="binding site" evidence="1">
    <location>
        <position position="218"/>
    </location>
    <ligand>
        <name>substrate</name>
    </ligand>
</feature>
<feature type="binding site" evidence="1">
    <location>
        <position position="380"/>
    </location>
    <ligand>
        <name>substrate</name>
    </ligand>
</feature>
<feature type="site" description="Important for acyl-CoA specificity" evidence="1">
    <location>
        <position position="186"/>
    </location>
</feature>
<protein>
    <recommendedName>
        <fullName evidence="1">Serine O-succinyltransferase</fullName>
        <shortName evidence="1">SST</shortName>
        <ecNumber evidence="1">2.3.1.-</ecNumber>
    </recommendedName>
</protein>
<organism>
    <name type="scientific">Xanthomonas axonopodis pv. citri (strain 306)</name>
    <dbReference type="NCBI Taxonomy" id="190486"/>
    <lineage>
        <taxon>Bacteria</taxon>
        <taxon>Pseudomonadati</taxon>
        <taxon>Pseudomonadota</taxon>
        <taxon>Gammaproteobacteria</taxon>
        <taxon>Lysobacterales</taxon>
        <taxon>Lysobacteraceae</taxon>
        <taxon>Xanthomonas</taxon>
    </lineage>
</organism>
<name>SST_XANAC</name>
<proteinExistence type="inferred from homology"/>
<reference key="1">
    <citation type="journal article" date="2002" name="Nature">
        <title>Comparison of the genomes of two Xanthomonas pathogens with differing host specificities.</title>
        <authorList>
            <person name="da Silva A.C.R."/>
            <person name="Ferro J.A."/>
            <person name="Reinach F.C."/>
            <person name="Farah C.S."/>
            <person name="Furlan L.R."/>
            <person name="Quaggio R.B."/>
            <person name="Monteiro-Vitorello C.B."/>
            <person name="Van Sluys M.A."/>
            <person name="Almeida N.F. Jr."/>
            <person name="Alves L.M.C."/>
            <person name="do Amaral A.M."/>
            <person name="Bertolini M.C."/>
            <person name="Camargo L.E.A."/>
            <person name="Camarotte G."/>
            <person name="Cannavan F."/>
            <person name="Cardozo J."/>
            <person name="Chambergo F."/>
            <person name="Ciapina L.P."/>
            <person name="Cicarelli R.M.B."/>
            <person name="Coutinho L.L."/>
            <person name="Cursino-Santos J.R."/>
            <person name="El-Dorry H."/>
            <person name="Faria J.B."/>
            <person name="Ferreira A.J.S."/>
            <person name="Ferreira R.C.C."/>
            <person name="Ferro M.I.T."/>
            <person name="Formighieri E.F."/>
            <person name="Franco M.C."/>
            <person name="Greggio C.C."/>
            <person name="Gruber A."/>
            <person name="Katsuyama A.M."/>
            <person name="Kishi L.T."/>
            <person name="Leite R.P."/>
            <person name="Lemos E.G.M."/>
            <person name="Lemos M.V.F."/>
            <person name="Locali E.C."/>
            <person name="Machado M.A."/>
            <person name="Madeira A.M.B.N."/>
            <person name="Martinez-Rossi N.M."/>
            <person name="Martins E.C."/>
            <person name="Meidanis J."/>
            <person name="Menck C.F.M."/>
            <person name="Miyaki C.Y."/>
            <person name="Moon D.H."/>
            <person name="Moreira L.M."/>
            <person name="Novo M.T.M."/>
            <person name="Okura V.K."/>
            <person name="Oliveira M.C."/>
            <person name="Oliveira V.R."/>
            <person name="Pereira H.A."/>
            <person name="Rossi A."/>
            <person name="Sena J.A.D."/>
            <person name="Silva C."/>
            <person name="de Souza R.F."/>
            <person name="Spinola L.A.F."/>
            <person name="Takita M.A."/>
            <person name="Tamura R.E."/>
            <person name="Teixeira E.C."/>
            <person name="Tezza R.I.D."/>
            <person name="Trindade dos Santos M."/>
            <person name="Truffi D."/>
            <person name="Tsai S.M."/>
            <person name="White F.F."/>
            <person name="Setubal J.C."/>
            <person name="Kitajima J.P."/>
        </authorList>
    </citation>
    <scope>NUCLEOTIDE SEQUENCE [LARGE SCALE GENOMIC DNA]</scope>
    <source>
        <strain>306</strain>
    </source>
</reference>
<dbReference type="EC" id="2.3.1.-" evidence="1"/>
<dbReference type="EMBL" id="AE008923">
    <property type="protein sequence ID" value="AAM37185.1"/>
    <property type="molecule type" value="Genomic_DNA"/>
</dbReference>
<dbReference type="RefSeq" id="WP_003486990.1">
    <property type="nucleotide sequence ID" value="NC_003919.1"/>
</dbReference>
<dbReference type="SMR" id="Q8PK44"/>
<dbReference type="ESTHER" id="xanax-METX">
    <property type="family name" value="Homoserine_transacetylase"/>
</dbReference>
<dbReference type="KEGG" id="xac:XAC2332"/>
<dbReference type="eggNOG" id="COG2021">
    <property type="taxonomic scope" value="Bacteria"/>
</dbReference>
<dbReference type="HOGENOM" id="CLU_028760_1_2_6"/>
<dbReference type="UniPathway" id="UPA00136">
    <property type="reaction ID" value="UER00199"/>
</dbReference>
<dbReference type="Proteomes" id="UP000000576">
    <property type="component" value="Chromosome"/>
</dbReference>
<dbReference type="GO" id="GO:0005737">
    <property type="term" value="C:cytoplasm"/>
    <property type="evidence" value="ECO:0007669"/>
    <property type="project" value="UniProtKB-SubCell"/>
</dbReference>
<dbReference type="GO" id="GO:0004414">
    <property type="term" value="F:homoserine O-acetyltransferase activity"/>
    <property type="evidence" value="ECO:0007669"/>
    <property type="project" value="TreeGrafter"/>
</dbReference>
<dbReference type="GO" id="GO:0160210">
    <property type="term" value="F:L-serine O-succinyltransferase activity"/>
    <property type="evidence" value="ECO:0007669"/>
    <property type="project" value="RHEA"/>
</dbReference>
<dbReference type="GO" id="GO:0006535">
    <property type="term" value="P:cysteine biosynthetic process from serine"/>
    <property type="evidence" value="ECO:0007669"/>
    <property type="project" value="UniProtKB-UniRule"/>
</dbReference>
<dbReference type="GO" id="GO:0009092">
    <property type="term" value="P:homoserine metabolic process"/>
    <property type="evidence" value="ECO:0007669"/>
    <property type="project" value="TreeGrafter"/>
</dbReference>
<dbReference type="GO" id="GO:0009086">
    <property type="term" value="P:methionine biosynthetic process"/>
    <property type="evidence" value="ECO:0007669"/>
    <property type="project" value="TreeGrafter"/>
</dbReference>
<dbReference type="Gene3D" id="3.40.50.1820">
    <property type="entry name" value="alpha/beta hydrolase"/>
    <property type="match status" value="1"/>
</dbReference>
<dbReference type="HAMAP" id="MF_00296">
    <property type="entry name" value="MetX_acyltransf"/>
    <property type="match status" value="1"/>
</dbReference>
<dbReference type="InterPro" id="IPR000073">
    <property type="entry name" value="AB_hydrolase_1"/>
</dbReference>
<dbReference type="InterPro" id="IPR029058">
    <property type="entry name" value="AB_hydrolase_fold"/>
</dbReference>
<dbReference type="InterPro" id="IPR008220">
    <property type="entry name" value="HAT_MetX-like"/>
</dbReference>
<dbReference type="NCBIfam" id="TIGR01392">
    <property type="entry name" value="homoserO_Ac_trn"/>
    <property type="match status" value="1"/>
</dbReference>
<dbReference type="NCBIfam" id="NF001209">
    <property type="entry name" value="PRK00175.1"/>
    <property type="match status" value="1"/>
</dbReference>
<dbReference type="PANTHER" id="PTHR32268">
    <property type="entry name" value="HOMOSERINE O-ACETYLTRANSFERASE"/>
    <property type="match status" value="1"/>
</dbReference>
<dbReference type="PANTHER" id="PTHR32268:SF11">
    <property type="entry name" value="HOMOSERINE O-ACETYLTRANSFERASE"/>
    <property type="match status" value="1"/>
</dbReference>
<dbReference type="Pfam" id="PF00561">
    <property type="entry name" value="Abhydrolase_1"/>
    <property type="match status" value="1"/>
</dbReference>
<dbReference type="PIRSF" id="PIRSF000443">
    <property type="entry name" value="Homoser_Ac_trans"/>
    <property type="match status" value="1"/>
</dbReference>
<dbReference type="SUPFAM" id="SSF53474">
    <property type="entry name" value="alpha/beta-Hydrolases"/>
    <property type="match status" value="1"/>
</dbReference>
<keyword id="KW-0012">Acyltransferase</keyword>
<keyword id="KW-0028">Amino-acid biosynthesis</keyword>
<keyword id="KW-0198">Cysteine biosynthesis</keyword>
<keyword id="KW-0963">Cytoplasm</keyword>
<keyword id="KW-0808">Transferase</keyword>
<gene>
    <name type="primary">metX</name>
    <name type="ordered locus">XAC2332</name>
</gene>